<gene>
    <name evidence="2" type="primary">MTMR8</name>
    <name type="ORF">RCJMB04_3d12</name>
</gene>
<dbReference type="EC" id="3.1.3.95" evidence="2"/>
<dbReference type="EMBL" id="AJ851448">
    <property type="protein sequence ID" value="CAH65082.1"/>
    <property type="molecule type" value="mRNA"/>
</dbReference>
<dbReference type="RefSeq" id="NP_001012717.1">
    <property type="nucleotide sequence ID" value="NM_001012699.1"/>
</dbReference>
<dbReference type="SMR" id="Q5F452"/>
<dbReference type="FunCoup" id="Q5F452">
    <property type="interactions" value="129"/>
</dbReference>
<dbReference type="STRING" id="9031.ENSGALP00000012257"/>
<dbReference type="PaxDb" id="9031-ENSGALP00000012257"/>
<dbReference type="GeneID" id="422312"/>
<dbReference type="KEGG" id="gga:422312"/>
<dbReference type="CTD" id="55613"/>
<dbReference type="VEuPathDB" id="HostDB:geneid_422312"/>
<dbReference type="eggNOG" id="KOG1089">
    <property type="taxonomic scope" value="Eukaryota"/>
</dbReference>
<dbReference type="InParanoid" id="Q5F452"/>
<dbReference type="OrthoDB" id="271628at2759"/>
<dbReference type="PhylomeDB" id="Q5F452"/>
<dbReference type="PRO" id="PR:Q5F452"/>
<dbReference type="Proteomes" id="UP000000539">
    <property type="component" value="Unassembled WGS sequence"/>
</dbReference>
<dbReference type="GO" id="GO:0005737">
    <property type="term" value="C:cytoplasm"/>
    <property type="evidence" value="ECO:0000318"/>
    <property type="project" value="GO_Central"/>
</dbReference>
<dbReference type="GO" id="GO:0005635">
    <property type="term" value="C:nuclear envelope"/>
    <property type="evidence" value="ECO:0000318"/>
    <property type="project" value="GO_Central"/>
</dbReference>
<dbReference type="GO" id="GO:0052629">
    <property type="term" value="F:phosphatidylinositol-3,5-bisphosphate 3-phosphatase activity"/>
    <property type="evidence" value="ECO:0007669"/>
    <property type="project" value="UniProtKB-EC"/>
</dbReference>
<dbReference type="GO" id="GO:0106018">
    <property type="term" value="F:phosphatidylinositol-3,5-bisphosphate phosphatase activity"/>
    <property type="evidence" value="ECO:0000318"/>
    <property type="project" value="GO_Central"/>
</dbReference>
<dbReference type="GO" id="GO:0004438">
    <property type="term" value="F:phosphatidylinositol-3-phosphate phosphatase activity"/>
    <property type="evidence" value="ECO:0000318"/>
    <property type="project" value="GO_Central"/>
</dbReference>
<dbReference type="GO" id="GO:0046856">
    <property type="term" value="P:phosphatidylinositol dephosphorylation"/>
    <property type="evidence" value="ECO:0000318"/>
    <property type="project" value="GO_Central"/>
</dbReference>
<dbReference type="CDD" id="cd13345">
    <property type="entry name" value="PH-GRAM_MTMR8"/>
    <property type="match status" value="1"/>
</dbReference>
<dbReference type="CDD" id="cd14584">
    <property type="entry name" value="PTP-MTMR8"/>
    <property type="match status" value="1"/>
</dbReference>
<dbReference type="FunFam" id="2.30.29.30:FF:000135">
    <property type="entry name" value="Myotubularin related protein 6"/>
    <property type="match status" value="1"/>
</dbReference>
<dbReference type="Gene3D" id="2.30.29.30">
    <property type="entry name" value="Pleckstrin-homology domain (PH domain)/Phosphotyrosine-binding domain (PTB)"/>
    <property type="match status" value="1"/>
</dbReference>
<dbReference type="InterPro" id="IPR030591">
    <property type="entry name" value="MTMR8_PTP"/>
</dbReference>
<dbReference type="InterPro" id="IPR030564">
    <property type="entry name" value="Myotubularin"/>
</dbReference>
<dbReference type="InterPro" id="IPR010569">
    <property type="entry name" value="Myotubularin-like_Pase_dom"/>
</dbReference>
<dbReference type="InterPro" id="IPR011993">
    <property type="entry name" value="PH-like_dom_sf"/>
</dbReference>
<dbReference type="InterPro" id="IPR029021">
    <property type="entry name" value="Prot-tyrosine_phosphatase-like"/>
</dbReference>
<dbReference type="InterPro" id="IPR016130">
    <property type="entry name" value="Tyr_Pase_AS"/>
</dbReference>
<dbReference type="InterPro" id="IPR003595">
    <property type="entry name" value="Tyr_Pase_cat"/>
</dbReference>
<dbReference type="PANTHER" id="PTHR10807">
    <property type="entry name" value="MYOTUBULARIN-RELATED"/>
    <property type="match status" value="1"/>
</dbReference>
<dbReference type="PANTHER" id="PTHR10807:SF36">
    <property type="entry name" value="MYOTUBULARIN-RELATED PROTEIN 8"/>
    <property type="match status" value="1"/>
</dbReference>
<dbReference type="Pfam" id="PF06602">
    <property type="entry name" value="Myotub-related"/>
    <property type="match status" value="1"/>
</dbReference>
<dbReference type="Pfam" id="PF21098">
    <property type="entry name" value="PH-GRAM_MTMR6-like"/>
    <property type="match status" value="1"/>
</dbReference>
<dbReference type="SMART" id="SM00404">
    <property type="entry name" value="PTPc_motif"/>
    <property type="match status" value="1"/>
</dbReference>
<dbReference type="SUPFAM" id="SSF52799">
    <property type="entry name" value="(Phosphotyrosine protein) phosphatases II"/>
    <property type="match status" value="1"/>
</dbReference>
<dbReference type="SUPFAM" id="SSF50729">
    <property type="entry name" value="PH domain-like"/>
    <property type="match status" value="1"/>
</dbReference>
<dbReference type="PROSITE" id="PS51339">
    <property type="entry name" value="PPASE_MYOTUBULARIN"/>
    <property type="match status" value="1"/>
</dbReference>
<dbReference type="PROSITE" id="PS00383">
    <property type="entry name" value="TYR_PHOSPHATASE_1"/>
    <property type="match status" value="1"/>
</dbReference>
<keyword id="KW-0175">Coiled coil</keyword>
<keyword id="KW-0378">Hydrolase</keyword>
<keyword id="KW-0443">Lipid metabolism</keyword>
<keyword id="KW-0539">Nucleus</keyword>
<keyword id="KW-1185">Reference proteome</keyword>
<evidence type="ECO:0000250" key="1">
    <source>
        <dbReference type="UniProtKB" id="Q13614"/>
    </source>
</evidence>
<evidence type="ECO:0000250" key="2">
    <source>
        <dbReference type="UniProtKB" id="Q96EF0"/>
    </source>
</evidence>
<evidence type="ECO:0000255" key="3"/>
<evidence type="ECO:0000255" key="4">
    <source>
        <dbReference type="PROSITE-ProRule" id="PRU00669"/>
    </source>
</evidence>
<evidence type="ECO:0000255" key="5">
    <source>
        <dbReference type="PROSITE-ProRule" id="PRU10044"/>
    </source>
</evidence>
<evidence type="ECO:0000305" key="6"/>
<feature type="chain" id="PRO_0000330035" description="Phosphatidylinositol-3,5-bisphosphate 3-phosphatase MTMR8">
    <location>
        <begin position="1"/>
        <end position="629"/>
    </location>
</feature>
<feature type="domain" description="Myotubularin phosphatase" evidence="4">
    <location>
        <begin position="126"/>
        <end position="500"/>
    </location>
</feature>
<feature type="coiled-coil region" evidence="3">
    <location>
        <begin position="517"/>
        <end position="543"/>
    </location>
</feature>
<feature type="active site" description="Phosphocysteine intermediate" evidence="5">
    <location>
        <position position="338"/>
    </location>
</feature>
<feature type="binding site" evidence="1">
    <location>
        <position position="250"/>
    </location>
    <ligand>
        <name>a 1,2-diacyl-sn-glycero-3-phospho-(1D-myo-inositol-3,5-bisphosphate)</name>
        <dbReference type="ChEBI" id="CHEBI:57923"/>
    </ligand>
</feature>
<feature type="binding site" evidence="1">
    <location>
        <position position="250"/>
    </location>
    <ligand>
        <name>a 1,2-diacyl-sn-glycero-3-phospho-(1D-myo-inositol-3-phosphate)</name>
        <dbReference type="ChEBI" id="CHEBI:58088"/>
    </ligand>
</feature>
<feature type="binding site" evidence="1">
    <location>
        <position position="275"/>
    </location>
    <ligand>
        <name>a 1,2-diacyl-sn-glycero-3-phospho-(1D-myo-inositol-3,5-bisphosphate)</name>
        <dbReference type="ChEBI" id="CHEBI:57923"/>
    </ligand>
</feature>
<feature type="binding site" evidence="1">
    <location>
        <position position="275"/>
    </location>
    <ligand>
        <name>a 1,2-diacyl-sn-glycero-3-phospho-(1D-myo-inositol-3-phosphate)</name>
        <dbReference type="ChEBI" id="CHEBI:58088"/>
    </ligand>
</feature>
<feature type="binding site" evidence="1">
    <location>
        <position position="276"/>
    </location>
    <ligand>
        <name>a 1,2-diacyl-sn-glycero-3-phospho-(1D-myo-inositol-3,5-bisphosphate)</name>
        <dbReference type="ChEBI" id="CHEBI:57923"/>
    </ligand>
</feature>
<feature type="binding site" evidence="1">
    <location>
        <position position="276"/>
    </location>
    <ligand>
        <name>a 1,2-diacyl-sn-glycero-3-phospho-(1D-myo-inositol-3-phosphate)</name>
        <dbReference type="ChEBI" id="CHEBI:58088"/>
    </ligand>
</feature>
<feature type="binding site" evidence="1">
    <location>
        <position position="339"/>
    </location>
    <ligand>
        <name>a 1,2-diacyl-sn-glycero-3-phospho-(1D-myo-inositol-3,5-bisphosphate)</name>
        <dbReference type="ChEBI" id="CHEBI:57923"/>
    </ligand>
</feature>
<feature type="binding site" evidence="1">
    <location>
        <position position="339"/>
    </location>
    <ligand>
        <name>a 1,2-diacyl-sn-glycero-3-phospho-(1D-myo-inositol-3-phosphate)</name>
        <dbReference type="ChEBI" id="CHEBI:58088"/>
    </ligand>
</feature>
<feature type="binding site" evidence="2">
    <location>
        <position position="339"/>
    </location>
    <ligand>
        <name>phosphate</name>
        <dbReference type="ChEBI" id="CHEBI:43474"/>
    </ligand>
</feature>
<feature type="binding site" evidence="1">
    <location>
        <position position="340"/>
    </location>
    <ligand>
        <name>a 1,2-diacyl-sn-glycero-3-phospho-(1D-myo-inositol-3,5-bisphosphate)</name>
        <dbReference type="ChEBI" id="CHEBI:57923"/>
    </ligand>
</feature>
<feature type="binding site" evidence="1">
    <location>
        <position position="340"/>
    </location>
    <ligand>
        <name>a 1,2-diacyl-sn-glycero-3-phospho-(1D-myo-inositol-3-phosphate)</name>
        <dbReference type="ChEBI" id="CHEBI:58088"/>
    </ligand>
</feature>
<feature type="binding site" evidence="2">
    <location>
        <position position="340"/>
    </location>
    <ligand>
        <name>phosphate</name>
        <dbReference type="ChEBI" id="CHEBI:43474"/>
    </ligand>
</feature>
<feature type="binding site" evidence="1">
    <location>
        <position position="341"/>
    </location>
    <ligand>
        <name>a 1,2-diacyl-sn-glycero-3-phospho-(1D-myo-inositol-3,5-bisphosphate)</name>
        <dbReference type="ChEBI" id="CHEBI:57923"/>
    </ligand>
</feature>
<feature type="binding site" evidence="1">
    <location>
        <position position="341"/>
    </location>
    <ligand>
        <name>a 1,2-diacyl-sn-glycero-3-phospho-(1D-myo-inositol-3-phosphate)</name>
        <dbReference type="ChEBI" id="CHEBI:58088"/>
    </ligand>
</feature>
<feature type="binding site" evidence="1">
    <location>
        <position position="342"/>
    </location>
    <ligand>
        <name>a 1,2-diacyl-sn-glycero-3-phospho-(1D-myo-inositol-3,5-bisphosphate)</name>
        <dbReference type="ChEBI" id="CHEBI:57923"/>
    </ligand>
</feature>
<feature type="binding site" evidence="1">
    <location>
        <position position="342"/>
    </location>
    <ligand>
        <name>a 1,2-diacyl-sn-glycero-3-phospho-(1D-myo-inositol-3-phosphate)</name>
        <dbReference type="ChEBI" id="CHEBI:58088"/>
    </ligand>
</feature>
<feature type="binding site" evidence="2">
    <location>
        <position position="342"/>
    </location>
    <ligand>
        <name>phosphate</name>
        <dbReference type="ChEBI" id="CHEBI:43474"/>
    </ligand>
</feature>
<feature type="binding site" evidence="1">
    <location>
        <position position="343"/>
    </location>
    <ligand>
        <name>a 1,2-diacyl-sn-glycero-3-phospho-(1D-myo-inositol-3,5-bisphosphate)</name>
        <dbReference type="ChEBI" id="CHEBI:57923"/>
    </ligand>
</feature>
<feature type="binding site" evidence="1">
    <location>
        <position position="343"/>
    </location>
    <ligand>
        <name>a 1,2-diacyl-sn-glycero-3-phospho-(1D-myo-inositol-3-phosphate)</name>
        <dbReference type="ChEBI" id="CHEBI:58088"/>
    </ligand>
</feature>
<feature type="binding site" evidence="2">
    <location>
        <position position="343"/>
    </location>
    <ligand>
        <name>phosphate</name>
        <dbReference type="ChEBI" id="CHEBI:43474"/>
    </ligand>
</feature>
<feature type="binding site" evidence="1">
    <location>
        <position position="344"/>
    </location>
    <ligand>
        <name>a 1,2-diacyl-sn-glycero-3-phospho-(1D-myo-inositol-3,5-bisphosphate)</name>
        <dbReference type="ChEBI" id="CHEBI:57923"/>
    </ligand>
</feature>
<feature type="binding site" evidence="1">
    <location>
        <position position="344"/>
    </location>
    <ligand>
        <name>a 1,2-diacyl-sn-glycero-3-phospho-(1D-myo-inositol-3-phosphate)</name>
        <dbReference type="ChEBI" id="CHEBI:58088"/>
    </ligand>
</feature>
<feature type="binding site" evidence="2">
    <location>
        <position position="344"/>
    </location>
    <ligand>
        <name>phosphate</name>
        <dbReference type="ChEBI" id="CHEBI:43474"/>
    </ligand>
</feature>
<feature type="binding site" evidence="1">
    <location>
        <position position="380"/>
    </location>
    <ligand>
        <name>a 1,2-diacyl-sn-glycero-3-phospho-(1D-myo-inositol-3,5-bisphosphate)</name>
        <dbReference type="ChEBI" id="CHEBI:57923"/>
    </ligand>
</feature>
<feature type="binding site" evidence="1">
    <location>
        <position position="384"/>
    </location>
    <ligand>
        <name>a 1,2-diacyl-sn-glycero-3-phospho-(1D-myo-inositol-3,5-bisphosphate)</name>
        <dbReference type="ChEBI" id="CHEBI:57923"/>
    </ligand>
</feature>
<feature type="binding site" evidence="1">
    <location>
        <position position="384"/>
    </location>
    <ligand>
        <name>a 1,2-diacyl-sn-glycero-3-phospho-(1D-myo-inositol-3-phosphate)</name>
        <dbReference type="ChEBI" id="CHEBI:58088"/>
    </ligand>
</feature>
<comment type="function">
    <text evidence="2">Lipid phosphatase that specifically dephosphorylates the D-3 position of phosphatidylinositol 3-phosphate and phosphatidylinositol 3,5-bisphosphate, generating phosphatidylinositol and phosphatidylinositol 5-phosphate.</text>
</comment>
<comment type="catalytic activity">
    <reaction evidence="2">
        <text>a 1,2-diacyl-sn-glycero-3-phospho-(1D-myo-inositol-3,5-bisphosphate) + H2O = a 1,2-diacyl-sn-glycero-3-phospho-(1D-myo-inositol-5-phosphate) + phosphate</text>
        <dbReference type="Rhea" id="RHEA:39019"/>
        <dbReference type="ChEBI" id="CHEBI:15377"/>
        <dbReference type="ChEBI" id="CHEBI:43474"/>
        <dbReference type="ChEBI" id="CHEBI:57795"/>
        <dbReference type="ChEBI" id="CHEBI:57923"/>
        <dbReference type="EC" id="3.1.3.95"/>
    </reaction>
</comment>
<comment type="catalytic activity">
    <reaction evidence="2">
        <text>a 1,2-diacyl-sn-glycero-3-phospho-(1D-myo-inositol-3-phosphate) + H2O = a 1,2-diacyl-sn-glycero-3-phospho-(1D-myo-inositol) + phosphate</text>
        <dbReference type="Rhea" id="RHEA:12316"/>
        <dbReference type="ChEBI" id="CHEBI:15377"/>
        <dbReference type="ChEBI" id="CHEBI:43474"/>
        <dbReference type="ChEBI" id="CHEBI:57880"/>
        <dbReference type="ChEBI" id="CHEBI:58088"/>
    </reaction>
</comment>
<comment type="catalytic activity">
    <reaction evidence="2">
        <text>1,2-dioctanoyl-sn-glycero-3-phospho-(1D-myo-inositol-3,5-bisphosphate) + H2O = 1,2-dioctanoyl-sn-glycero-3-phospho-(1D-myo-inositol-5-phosphate) + phosphate</text>
        <dbReference type="Rhea" id="RHEA:45632"/>
        <dbReference type="ChEBI" id="CHEBI:15377"/>
        <dbReference type="ChEBI" id="CHEBI:43474"/>
        <dbReference type="ChEBI" id="CHEBI:78911"/>
        <dbReference type="ChEBI" id="CHEBI:85342"/>
    </reaction>
</comment>
<comment type="subunit">
    <text evidence="2">Homodimer.</text>
</comment>
<comment type="subcellular location">
    <subcellularLocation>
        <location evidence="2">Nucleus envelope</location>
    </subcellularLocation>
</comment>
<comment type="similarity">
    <text evidence="6">Belongs to the protein-tyrosine phosphatase family. Non-receptor class myotubularin subfamily.</text>
</comment>
<accession>Q5F452</accession>
<reference key="1">
    <citation type="journal article" date="2005" name="Genome Biol.">
        <title>Full-length cDNAs from chicken bursal lymphocytes to facilitate gene function analysis.</title>
        <authorList>
            <person name="Caldwell R.B."/>
            <person name="Kierzek A.M."/>
            <person name="Arakawa H."/>
            <person name="Bezzubov Y."/>
            <person name="Zaim J."/>
            <person name="Fiedler P."/>
            <person name="Kutter S."/>
            <person name="Blagodatski A."/>
            <person name="Kostovska D."/>
            <person name="Koter M."/>
            <person name="Plachy J."/>
            <person name="Carninci P."/>
            <person name="Hayashizaki Y."/>
            <person name="Buerstedde J.-M."/>
        </authorList>
    </citation>
    <scope>NUCLEOTIDE SEQUENCE [LARGE SCALE MRNA]</scope>
    <source>
        <strain>CB</strain>
        <tissue>Bursa of Fabricius</tissue>
    </source>
</reference>
<proteinExistence type="evidence at transcript level"/>
<sequence length="629" mass="71967">MEHITTPKVENVKLLDRYTNRKAASGTLYLTATHLIYVDASAEVRKETWILHHHIATVEKLPLTTAGCPLLIHCKNFHVAHFVIGQERDCHEVYTSLLKLSQPVKPEELYAFSYNPKMSKDNREIGWKLIDLKVDYQRMGIPNDYWEITDLNKDYEVCNTYPPEIVVPRAASKATVIGSSRFRSRGRIPVLSYLYKENNAAICRCSQPLSGFSARCLEDEQMLQAIREANPGSPFMYVVDTRPKLNAMANRAAGKGYENEDNYDNIRFKFIGIENIHVMRSSLQKLLEVCETKSPSMSDFLTGLENSGWLRHIKAVMDASVFLAKAVKDEKASVLVHCSDGWDRTAQVCSLASLLLDPFYRAFKGFMVLIEKEWIAMGHKFSHRCGHLDGDPKEVSPVFTQFIECVWQLMQQFPCTFEFNEHFLLEIHDHVYSCQFGNFLGTCHKEREDLKIFEKTHSLWPFLLQKKQELRNPLYRGFTAYKELQPNTLPFSFQFWCGMYNRFDKGMHPKQCVLDHLLSCMNQKIKLEDNASELENKLPFLDGPLPNEACFLSKVGCAASKTPMLNTPQDYEGEAPPVLTNGISVGDINVTSDVDQRNKENLANHRDLHLNDSVDVLNSEAKDGKPQHH</sequence>
<protein>
    <recommendedName>
        <fullName evidence="2">Phosphatidylinositol-3,5-bisphosphate 3-phosphatase MTMR8</fullName>
        <ecNumber evidence="2">3.1.3.95</ecNumber>
    </recommendedName>
    <alternativeName>
        <fullName evidence="2">Myotubularin-related protein 8</fullName>
    </alternativeName>
    <alternativeName>
        <fullName evidence="2">Phosphatidylinositol-3-phosphate phosphatase</fullName>
    </alternativeName>
</protein>
<organism>
    <name type="scientific">Gallus gallus</name>
    <name type="common">Chicken</name>
    <dbReference type="NCBI Taxonomy" id="9031"/>
    <lineage>
        <taxon>Eukaryota</taxon>
        <taxon>Metazoa</taxon>
        <taxon>Chordata</taxon>
        <taxon>Craniata</taxon>
        <taxon>Vertebrata</taxon>
        <taxon>Euteleostomi</taxon>
        <taxon>Archelosauria</taxon>
        <taxon>Archosauria</taxon>
        <taxon>Dinosauria</taxon>
        <taxon>Saurischia</taxon>
        <taxon>Theropoda</taxon>
        <taxon>Coelurosauria</taxon>
        <taxon>Aves</taxon>
        <taxon>Neognathae</taxon>
        <taxon>Galloanserae</taxon>
        <taxon>Galliformes</taxon>
        <taxon>Phasianidae</taxon>
        <taxon>Phasianinae</taxon>
        <taxon>Gallus</taxon>
    </lineage>
</organism>
<name>MTMR8_CHICK</name>